<feature type="chain" id="PRO_0000071523" description="Protein REG2">
    <location>
        <begin position="1"/>
        <end position="338"/>
    </location>
</feature>
<feature type="region of interest" description="Disordered" evidence="1">
    <location>
        <begin position="1"/>
        <end position="21"/>
    </location>
</feature>
<name>REG2_YEAST</name>
<keyword id="KW-1185">Reference proteome</keyword>
<comment type="function">
    <text evidence="2">Regulatory subunit, binds to type-1 protein phosphatase. Functions with HEX2/REG1 and SNF1 protein kinase to regulate growth. Might regulate SNF1 directly or indirectly.</text>
</comment>
<comment type="interaction">
    <interactant intactId="EBI-14921">
        <id>P38232</id>
    </interactant>
    <interactant intactId="EBI-17516">
        <id>P06782</id>
        <label>SNF1</label>
    </interactant>
    <organismsDiffer>false</organismsDiffer>
    <experiments>3</experiments>
</comment>
<protein>
    <recommendedName>
        <fullName>Protein REG2</fullName>
    </recommendedName>
</protein>
<evidence type="ECO:0000256" key="1">
    <source>
        <dbReference type="SAM" id="MobiDB-lite"/>
    </source>
</evidence>
<evidence type="ECO:0000269" key="2">
    <source>
    </source>
</evidence>
<gene>
    <name type="primary">REG2</name>
    <name type="ordered locus">YBR050C</name>
    <name type="ORF">YBR0504</name>
</gene>
<sequence length="338" mass="38747">MTLSNCDSLDNLFQDPPEEEESSKFVEAVRTLMNRNDMGYPPAAANGTYCLKKIKSLNAKQWKINKKRMCMLPAVKKKNFDFHEQRSLILNLNLWKFIKFINCSSKNNYNKNNKHVRSSNNTVKNENVLPLQKHKKVDNDQRLENLFWRSWFKARKRRDIMGKPRERHIKFNDNVEQCIITDEHFIQRLPSTRLNSTDEQRPCSKSELDPCIGNAASKRSFYDYNSVYVASDAIITTAAATAIISSNSGDYQRGHDVRDVPRNVLLQAGETDFSSVLRVDSDLKLSNISHHSPVKPSSTSSHSTFIFESETDTDTDTDAETENDIDAYIDTSIPNLLL</sequence>
<dbReference type="EMBL" id="Z35919">
    <property type="protein sequence ID" value="CAA84994.1"/>
    <property type="molecule type" value="Genomic_DNA"/>
</dbReference>
<dbReference type="EMBL" id="Z46260">
    <property type="protein sequence ID" value="CAA86393.1"/>
    <property type="molecule type" value="Genomic_DNA"/>
</dbReference>
<dbReference type="EMBL" id="AY557867">
    <property type="protein sequence ID" value="AAS56193.1"/>
    <property type="molecule type" value="Genomic_DNA"/>
</dbReference>
<dbReference type="EMBL" id="BK006936">
    <property type="protein sequence ID" value="DAA07170.1"/>
    <property type="molecule type" value="Genomic_DNA"/>
</dbReference>
<dbReference type="PIR" id="S45908">
    <property type="entry name" value="S45908"/>
</dbReference>
<dbReference type="RefSeq" id="NP_009606.1">
    <property type="nucleotide sequence ID" value="NM_001178398.1"/>
</dbReference>
<dbReference type="BioGRID" id="32752">
    <property type="interactions" value="43"/>
</dbReference>
<dbReference type="ComplexPortal" id="CPX-1267">
    <property type="entry name" value="REG2-GLC7 phosphatase complex"/>
</dbReference>
<dbReference type="DIP" id="DIP-2377N"/>
<dbReference type="FunCoup" id="P38232">
    <property type="interactions" value="57"/>
</dbReference>
<dbReference type="IntAct" id="P38232">
    <property type="interactions" value="3"/>
</dbReference>
<dbReference type="MINT" id="P38232"/>
<dbReference type="STRING" id="4932.YBR050C"/>
<dbReference type="PaxDb" id="4932-YBR050C"/>
<dbReference type="EnsemblFungi" id="YBR050C_mRNA">
    <property type="protein sequence ID" value="YBR050C"/>
    <property type="gene ID" value="YBR050C"/>
</dbReference>
<dbReference type="GeneID" id="852340"/>
<dbReference type="KEGG" id="sce:YBR050C"/>
<dbReference type="AGR" id="SGD:S000000254"/>
<dbReference type="SGD" id="S000000254">
    <property type="gene designation" value="REG2"/>
</dbReference>
<dbReference type="VEuPathDB" id="FungiDB:YBR050C"/>
<dbReference type="HOGENOM" id="CLU_816848_0_0_1"/>
<dbReference type="InParanoid" id="P38232"/>
<dbReference type="OMA" id="RHIKFND"/>
<dbReference type="OrthoDB" id="4060358at2759"/>
<dbReference type="BioCyc" id="YEAST:G3O-29022-MONOMER"/>
<dbReference type="BioGRID-ORCS" id="852340">
    <property type="hits" value="2 hits in 10 CRISPR screens"/>
</dbReference>
<dbReference type="PRO" id="PR:P38232"/>
<dbReference type="Proteomes" id="UP000002311">
    <property type="component" value="Chromosome II"/>
</dbReference>
<dbReference type="RNAct" id="P38232">
    <property type="molecule type" value="protein"/>
</dbReference>
<dbReference type="GO" id="GO:0000164">
    <property type="term" value="C:protein phosphatase type 1 complex"/>
    <property type="evidence" value="ECO:0000353"/>
    <property type="project" value="ComplexPortal"/>
</dbReference>
<dbReference type="GO" id="GO:0019888">
    <property type="term" value="F:protein phosphatase regulator activity"/>
    <property type="evidence" value="ECO:0000314"/>
    <property type="project" value="SGD"/>
</dbReference>
<dbReference type="GO" id="GO:0071333">
    <property type="term" value="P:cellular response to glucose stimulus"/>
    <property type="evidence" value="ECO:0000315"/>
    <property type="project" value="SGD"/>
</dbReference>
<dbReference type="GO" id="GO:1904547">
    <property type="term" value="P:regulation of cellular response to glucose starvation"/>
    <property type="evidence" value="ECO:0000315"/>
    <property type="project" value="SGD"/>
</dbReference>
<dbReference type="InterPro" id="IPR013860">
    <property type="entry name" value="AreA_GATA"/>
</dbReference>
<dbReference type="Pfam" id="PF08550">
    <property type="entry name" value="GATA_AreA"/>
    <property type="match status" value="1"/>
</dbReference>
<accession>P38232</accession>
<accession>D6VQ50</accession>
<organism>
    <name type="scientific">Saccharomyces cerevisiae (strain ATCC 204508 / S288c)</name>
    <name type="common">Baker's yeast</name>
    <dbReference type="NCBI Taxonomy" id="559292"/>
    <lineage>
        <taxon>Eukaryota</taxon>
        <taxon>Fungi</taxon>
        <taxon>Dikarya</taxon>
        <taxon>Ascomycota</taxon>
        <taxon>Saccharomycotina</taxon>
        <taxon>Saccharomycetes</taxon>
        <taxon>Saccharomycetales</taxon>
        <taxon>Saccharomycetaceae</taxon>
        <taxon>Saccharomyces</taxon>
    </lineage>
</organism>
<reference key="1">
    <citation type="journal article" date="1995" name="Yeast">
        <title>Sequence and analysis of 24 kb on chromosome II of Saccharomyces cerevisiae.</title>
        <authorList>
            <person name="Aljinovic G."/>
            <person name="Pohl T.M."/>
        </authorList>
    </citation>
    <scope>NUCLEOTIDE SEQUENCE [GENOMIC DNA]</scope>
    <source>
        <strain>ATCC 204508 / S288c</strain>
    </source>
</reference>
<reference key="2">
    <citation type="journal article" date="1994" name="EMBO J.">
        <title>Complete DNA sequence of yeast chromosome II.</title>
        <authorList>
            <person name="Feldmann H."/>
            <person name="Aigle M."/>
            <person name="Aljinovic G."/>
            <person name="Andre B."/>
            <person name="Baclet M.C."/>
            <person name="Barthe C."/>
            <person name="Baur A."/>
            <person name="Becam A.-M."/>
            <person name="Biteau N."/>
            <person name="Boles E."/>
            <person name="Brandt T."/>
            <person name="Brendel M."/>
            <person name="Brueckner M."/>
            <person name="Bussereau F."/>
            <person name="Christiansen C."/>
            <person name="Contreras R."/>
            <person name="Crouzet M."/>
            <person name="Cziepluch C."/>
            <person name="Demolis N."/>
            <person name="Delaveau T."/>
            <person name="Doignon F."/>
            <person name="Domdey H."/>
            <person name="Duesterhus S."/>
            <person name="Dubois E."/>
            <person name="Dujon B."/>
            <person name="El Bakkoury M."/>
            <person name="Entian K.-D."/>
            <person name="Feuermann M."/>
            <person name="Fiers W."/>
            <person name="Fobo G.M."/>
            <person name="Fritz C."/>
            <person name="Gassenhuber J."/>
            <person name="Glansdorff N."/>
            <person name="Goffeau A."/>
            <person name="Grivell L.A."/>
            <person name="de Haan M."/>
            <person name="Hein C."/>
            <person name="Herbert C.J."/>
            <person name="Hollenberg C.P."/>
            <person name="Holmstroem K."/>
            <person name="Jacq C."/>
            <person name="Jacquet M."/>
            <person name="Jauniaux J.-C."/>
            <person name="Jonniaux J.-L."/>
            <person name="Kallesoee T."/>
            <person name="Kiesau P."/>
            <person name="Kirchrath L."/>
            <person name="Koetter P."/>
            <person name="Korol S."/>
            <person name="Liebl S."/>
            <person name="Logghe M."/>
            <person name="Lohan A.J.E."/>
            <person name="Louis E.J."/>
            <person name="Li Z.Y."/>
            <person name="Maat M.J."/>
            <person name="Mallet L."/>
            <person name="Mannhaupt G."/>
            <person name="Messenguy F."/>
            <person name="Miosga T."/>
            <person name="Molemans F."/>
            <person name="Mueller S."/>
            <person name="Nasr F."/>
            <person name="Obermaier B."/>
            <person name="Perea J."/>
            <person name="Pierard A."/>
            <person name="Piravandi E."/>
            <person name="Pohl F.M."/>
            <person name="Pohl T.M."/>
            <person name="Potier S."/>
            <person name="Proft M."/>
            <person name="Purnelle B."/>
            <person name="Ramezani Rad M."/>
            <person name="Rieger M."/>
            <person name="Rose M."/>
            <person name="Schaaff-Gerstenschlaeger I."/>
            <person name="Scherens B."/>
            <person name="Schwarzlose C."/>
            <person name="Skala J."/>
            <person name="Slonimski P.P."/>
            <person name="Smits P.H.M."/>
            <person name="Souciet J.-L."/>
            <person name="Steensma H.Y."/>
            <person name="Stucka R."/>
            <person name="Urrestarazu L.A."/>
            <person name="van der Aart Q.J.M."/>
            <person name="Van Dyck L."/>
            <person name="Vassarotti A."/>
            <person name="Vetter I."/>
            <person name="Vierendeels F."/>
            <person name="Vissers S."/>
            <person name="Wagner G."/>
            <person name="de Wergifosse P."/>
            <person name="Wolfe K.H."/>
            <person name="Zagulski M."/>
            <person name="Zimmermann F.K."/>
            <person name="Mewes H.-W."/>
            <person name="Kleine K."/>
        </authorList>
    </citation>
    <scope>NUCLEOTIDE SEQUENCE [LARGE SCALE GENOMIC DNA]</scope>
    <source>
        <strain>ATCC 204508 / S288c</strain>
    </source>
</reference>
<reference key="3">
    <citation type="journal article" date="2014" name="G3 (Bethesda)">
        <title>The reference genome sequence of Saccharomyces cerevisiae: Then and now.</title>
        <authorList>
            <person name="Engel S.R."/>
            <person name="Dietrich F.S."/>
            <person name="Fisk D.G."/>
            <person name="Binkley G."/>
            <person name="Balakrishnan R."/>
            <person name="Costanzo M.C."/>
            <person name="Dwight S.S."/>
            <person name="Hitz B.C."/>
            <person name="Karra K."/>
            <person name="Nash R.S."/>
            <person name="Weng S."/>
            <person name="Wong E.D."/>
            <person name="Lloyd P."/>
            <person name="Skrzypek M.S."/>
            <person name="Miyasato S.R."/>
            <person name="Simison M."/>
            <person name="Cherry J.M."/>
        </authorList>
    </citation>
    <scope>GENOME REANNOTATION</scope>
    <source>
        <strain>ATCC 204508 / S288c</strain>
    </source>
</reference>
<reference key="4">
    <citation type="journal article" date="2007" name="Genome Res.">
        <title>Approaching a complete repository of sequence-verified protein-encoding clones for Saccharomyces cerevisiae.</title>
        <authorList>
            <person name="Hu Y."/>
            <person name="Rolfs A."/>
            <person name="Bhullar B."/>
            <person name="Murthy T.V.S."/>
            <person name="Zhu C."/>
            <person name="Berger M.F."/>
            <person name="Camargo A.A."/>
            <person name="Kelley F."/>
            <person name="McCarron S."/>
            <person name="Jepson D."/>
            <person name="Richardson A."/>
            <person name="Raphael J."/>
            <person name="Moreira D."/>
            <person name="Taycher E."/>
            <person name="Zuo D."/>
            <person name="Mohr S."/>
            <person name="Kane M.F."/>
            <person name="Williamson J."/>
            <person name="Simpson A.J.G."/>
            <person name="Bulyk M.L."/>
            <person name="Harlow E."/>
            <person name="Marsischky G."/>
            <person name="Kolodner R.D."/>
            <person name="LaBaer J."/>
        </authorList>
    </citation>
    <scope>NUCLEOTIDE SEQUENCE [GENOMIC DNA]</scope>
    <source>
        <strain>ATCC 204508 / S288c</strain>
    </source>
</reference>
<reference key="5">
    <citation type="journal article" date="1996" name="Mol. Cell. Biol.">
        <title>The REG2 gene of Saccharomyces cerevisiae encodes a type 1 protein phosphatase-binding protein that functions with Reg1p and the Snf1 protein kinase to regulate growth.</title>
        <authorList>
            <person name="Frederick D.L."/>
            <person name="Tatchell K."/>
        </authorList>
    </citation>
    <scope>FUNCTION</scope>
</reference>
<proteinExistence type="evidence at protein level"/>